<dbReference type="EMBL" id="CP000923">
    <property type="protein sequence ID" value="ABY93651.1"/>
    <property type="molecule type" value="Genomic_DNA"/>
</dbReference>
<dbReference type="RefSeq" id="WP_003867432.1">
    <property type="nucleotide sequence ID" value="NC_010320.1"/>
</dbReference>
<dbReference type="SMR" id="B0K5L7"/>
<dbReference type="KEGG" id="tex:Teth514_2392"/>
<dbReference type="HOGENOM" id="CLU_148710_2_2_9"/>
<dbReference type="Proteomes" id="UP000002155">
    <property type="component" value="Chromosome"/>
</dbReference>
<dbReference type="GO" id="GO:0022627">
    <property type="term" value="C:cytosolic small ribosomal subunit"/>
    <property type="evidence" value="ECO:0007669"/>
    <property type="project" value="TreeGrafter"/>
</dbReference>
<dbReference type="GO" id="GO:0070181">
    <property type="term" value="F:small ribosomal subunit rRNA binding"/>
    <property type="evidence" value="ECO:0007669"/>
    <property type="project" value="TreeGrafter"/>
</dbReference>
<dbReference type="GO" id="GO:0003735">
    <property type="term" value="F:structural constituent of ribosome"/>
    <property type="evidence" value="ECO:0007669"/>
    <property type="project" value="InterPro"/>
</dbReference>
<dbReference type="GO" id="GO:0006412">
    <property type="term" value="P:translation"/>
    <property type="evidence" value="ECO:0007669"/>
    <property type="project" value="UniProtKB-UniRule"/>
</dbReference>
<dbReference type="FunFam" id="4.10.640.10:FF:000004">
    <property type="entry name" value="30S ribosomal protein S18"/>
    <property type="match status" value="1"/>
</dbReference>
<dbReference type="Gene3D" id="4.10.640.10">
    <property type="entry name" value="Ribosomal protein S18"/>
    <property type="match status" value="1"/>
</dbReference>
<dbReference type="HAMAP" id="MF_00270">
    <property type="entry name" value="Ribosomal_bS18"/>
    <property type="match status" value="1"/>
</dbReference>
<dbReference type="InterPro" id="IPR001648">
    <property type="entry name" value="Ribosomal_bS18"/>
</dbReference>
<dbReference type="InterPro" id="IPR018275">
    <property type="entry name" value="Ribosomal_bS18_CS"/>
</dbReference>
<dbReference type="InterPro" id="IPR036870">
    <property type="entry name" value="Ribosomal_bS18_sf"/>
</dbReference>
<dbReference type="NCBIfam" id="TIGR00165">
    <property type="entry name" value="S18"/>
    <property type="match status" value="1"/>
</dbReference>
<dbReference type="PANTHER" id="PTHR13479">
    <property type="entry name" value="30S RIBOSOMAL PROTEIN S18"/>
    <property type="match status" value="1"/>
</dbReference>
<dbReference type="PANTHER" id="PTHR13479:SF40">
    <property type="entry name" value="SMALL RIBOSOMAL SUBUNIT PROTEIN BS18M"/>
    <property type="match status" value="1"/>
</dbReference>
<dbReference type="Pfam" id="PF01084">
    <property type="entry name" value="Ribosomal_S18"/>
    <property type="match status" value="1"/>
</dbReference>
<dbReference type="PRINTS" id="PR00974">
    <property type="entry name" value="RIBOSOMALS18"/>
</dbReference>
<dbReference type="SUPFAM" id="SSF46911">
    <property type="entry name" value="Ribosomal protein S18"/>
    <property type="match status" value="1"/>
</dbReference>
<dbReference type="PROSITE" id="PS00057">
    <property type="entry name" value="RIBOSOMAL_S18"/>
    <property type="match status" value="1"/>
</dbReference>
<comment type="function">
    <text evidence="1">Binds as a heterodimer with protein bS6 to the central domain of the 16S rRNA, where it helps stabilize the platform of the 30S subunit.</text>
</comment>
<comment type="subunit">
    <text evidence="1">Part of the 30S ribosomal subunit. Forms a tight heterodimer with protein bS6.</text>
</comment>
<comment type="similarity">
    <text evidence="1">Belongs to the bacterial ribosomal protein bS18 family.</text>
</comment>
<reference key="1">
    <citation type="submission" date="2008-01" db="EMBL/GenBank/DDBJ databases">
        <title>Complete sequence of Thermoanaerobacter sp. X514.</title>
        <authorList>
            <consortium name="US DOE Joint Genome Institute"/>
            <person name="Copeland A."/>
            <person name="Lucas S."/>
            <person name="Lapidus A."/>
            <person name="Barry K."/>
            <person name="Glavina del Rio T."/>
            <person name="Dalin E."/>
            <person name="Tice H."/>
            <person name="Pitluck S."/>
            <person name="Bruce D."/>
            <person name="Goodwin L."/>
            <person name="Saunders E."/>
            <person name="Brettin T."/>
            <person name="Detter J.C."/>
            <person name="Han C."/>
            <person name="Schmutz J."/>
            <person name="Larimer F."/>
            <person name="Land M."/>
            <person name="Hauser L."/>
            <person name="Kyrpides N."/>
            <person name="Kim E."/>
            <person name="Hemme C."/>
            <person name="Fields M.W."/>
            <person name="He Z."/>
            <person name="Zhou J."/>
            <person name="Richardson P."/>
        </authorList>
    </citation>
    <scope>NUCLEOTIDE SEQUENCE [LARGE SCALE GENOMIC DNA]</scope>
    <source>
        <strain>X514</strain>
    </source>
</reference>
<accession>B0K5L7</accession>
<feature type="chain" id="PRO_1000114461" description="Small ribosomal subunit protein bS18">
    <location>
        <begin position="1"/>
        <end position="88"/>
    </location>
</feature>
<feature type="region of interest" description="Disordered" evidence="2">
    <location>
        <begin position="1"/>
        <end position="21"/>
    </location>
</feature>
<feature type="compositionally biased region" description="Low complexity" evidence="2">
    <location>
        <begin position="1"/>
        <end position="11"/>
    </location>
</feature>
<gene>
    <name evidence="1" type="primary">rpsR</name>
    <name type="ordered locus">Teth514_2392</name>
</gene>
<sequence length="88" mass="10133">MTTANTTAKDNAATKKRGRKAKKRVCAFCTDNIDKIDYKDVARLRKYITERGKILPRRITGNCARHQRQLTKAIKRARQIALLPYTVE</sequence>
<evidence type="ECO:0000255" key="1">
    <source>
        <dbReference type="HAMAP-Rule" id="MF_00270"/>
    </source>
</evidence>
<evidence type="ECO:0000256" key="2">
    <source>
        <dbReference type="SAM" id="MobiDB-lite"/>
    </source>
</evidence>
<evidence type="ECO:0000305" key="3"/>
<organism>
    <name type="scientific">Thermoanaerobacter sp. (strain X514)</name>
    <dbReference type="NCBI Taxonomy" id="399726"/>
    <lineage>
        <taxon>Bacteria</taxon>
        <taxon>Bacillati</taxon>
        <taxon>Bacillota</taxon>
        <taxon>Clostridia</taxon>
        <taxon>Thermoanaerobacterales</taxon>
        <taxon>Thermoanaerobacteraceae</taxon>
        <taxon>Thermoanaerobacter</taxon>
    </lineage>
</organism>
<keyword id="KW-0687">Ribonucleoprotein</keyword>
<keyword id="KW-0689">Ribosomal protein</keyword>
<keyword id="KW-0694">RNA-binding</keyword>
<keyword id="KW-0699">rRNA-binding</keyword>
<proteinExistence type="inferred from homology"/>
<name>RS18_THEPX</name>
<protein>
    <recommendedName>
        <fullName evidence="1">Small ribosomal subunit protein bS18</fullName>
    </recommendedName>
    <alternativeName>
        <fullName evidence="3">30S ribosomal protein S18</fullName>
    </alternativeName>
</protein>